<reference key="1">
    <citation type="journal article" date="2003" name="Science">
        <title>Role of mobile DNA in the evolution of vancomycin-resistant Enterococcus faecalis.</title>
        <authorList>
            <person name="Paulsen I.T."/>
            <person name="Banerjei L."/>
            <person name="Myers G.S.A."/>
            <person name="Nelson K.E."/>
            <person name="Seshadri R."/>
            <person name="Read T.D."/>
            <person name="Fouts D.E."/>
            <person name="Eisen J.A."/>
            <person name="Gill S.R."/>
            <person name="Heidelberg J.F."/>
            <person name="Tettelin H."/>
            <person name="Dodson R.J."/>
            <person name="Umayam L.A."/>
            <person name="Brinkac L.M."/>
            <person name="Beanan M.J."/>
            <person name="Daugherty S.C."/>
            <person name="DeBoy R.T."/>
            <person name="Durkin S.A."/>
            <person name="Kolonay J.F."/>
            <person name="Madupu R."/>
            <person name="Nelson W.C."/>
            <person name="Vamathevan J.J."/>
            <person name="Tran B."/>
            <person name="Upton J."/>
            <person name="Hansen T."/>
            <person name="Shetty J."/>
            <person name="Khouri H.M."/>
            <person name="Utterback T.R."/>
            <person name="Radune D."/>
            <person name="Ketchum K.A."/>
            <person name="Dougherty B.A."/>
            <person name="Fraser C.M."/>
        </authorList>
    </citation>
    <scope>NUCLEOTIDE SEQUENCE [LARGE SCALE GENOMIC DNA]</scope>
    <source>
        <strain>ATCC 700802 / V583</strain>
    </source>
</reference>
<proteinExistence type="inferred from homology"/>
<name>DIVIB_ENTFA</name>
<feature type="chain" id="PRO_0000414766" description="Cell division protein DivIB">
    <location>
        <begin position="1"/>
        <end position="374"/>
    </location>
</feature>
<feature type="topological domain" description="Cytoplasmic" evidence="1">
    <location>
        <begin position="1"/>
        <end position="103"/>
    </location>
</feature>
<feature type="transmembrane region" description="Helical" evidence="1">
    <location>
        <begin position="104"/>
        <end position="124"/>
    </location>
</feature>
<feature type="topological domain" description="Extracellular" evidence="1">
    <location>
        <begin position="125"/>
        <end position="374"/>
    </location>
</feature>
<feature type="domain" description="POTRA" evidence="2">
    <location>
        <begin position="126"/>
        <end position="197"/>
    </location>
</feature>
<feature type="region of interest" description="Disordered" evidence="3">
    <location>
        <begin position="1"/>
        <end position="90"/>
    </location>
</feature>
<feature type="region of interest" description="Disordered" evidence="3">
    <location>
        <begin position="325"/>
        <end position="374"/>
    </location>
</feature>
<feature type="compositionally biased region" description="Basic and acidic residues" evidence="3">
    <location>
        <begin position="39"/>
        <end position="53"/>
    </location>
</feature>
<feature type="compositionally biased region" description="Polar residues" evidence="3">
    <location>
        <begin position="56"/>
        <end position="75"/>
    </location>
</feature>
<feature type="compositionally biased region" description="Acidic residues" evidence="3">
    <location>
        <begin position="326"/>
        <end position="339"/>
    </location>
</feature>
<feature type="compositionally biased region" description="Polar residues" evidence="3">
    <location>
        <begin position="356"/>
        <end position="374"/>
    </location>
</feature>
<protein>
    <recommendedName>
        <fullName evidence="1">Cell division protein DivIB</fullName>
    </recommendedName>
</protein>
<sequence>MWKISNENDIFKKRKPLPPKKSEESQPELTPWQKQNQEYLKKQAEEAASKGENEQAEVTITLQEQSQEEPQQHLPQETVEEEEHFADRLPNVKKTRNKRLYRRLAFILTCLGTAILVALYFVSPLSRLSEVTVSGNKSVESQAIIQQSKLETGSGLWEQYSNRNYFSANIQKKFPIIKKANIKLNGINSFKIDIQEYQIVALAATKGGYHPILENGKTLAETTKAAESGKPIFENFKEDKLIPELMASYNKLPQEIKQGISEIKYAPSKTNKDLINVYMNDGNRVIVNISDLSEKMAYYSQVAEQMDKPGIVDMEVGIFSYPYEKESEETGSEVSEDSAVENQEVVDPNAGVATDEANNGTPTNGENQEVQQAE</sequence>
<accession>Q836V6</accession>
<organism>
    <name type="scientific">Enterococcus faecalis (strain ATCC 700802 / V583)</name>
    <dbReference type="NCBI Taxonomy" id="226185"/>
    <lineage>
        <taxon>Bacteria</taxon>
        <taxon>Bacillati</taxon>
        <taxon>Bacillota</taxon>
        <taxon>Bacilli</taxon>
        <taxon>Lactobacillales</taxon>
        <taxon>Enterococcaceae</taxon>
        <taxon>Enterococcus</taxon>
    </lineage>
</organism>
<gene>
    <name evidence="1" type="primary">divIB</name>
    <name type="synonym">ftsQ</name>
    <name type="ordered locus">EF_0995</name>
</gene>
<keyword id="KW-0131">Cell cycle</keyword>
<keyword id="KW-0132">Cell division</keyword>
<keyword id="KW-1003">Cell membrane</keyword>
<keyword id="KW-0472">Membrane</keyword>
<keyword id="KW-1185">Reference proteome</keyword>
<keyword id="KW-0812">Transmembrane</keyword>
<keyword id="KW-1133">Transmembrane helix</keyword>
<dbReference type="EMBL" id="AE016830">
    <property type="protein sequence ID" value="AAO80801.1"/>
    <property type="molecule type" value="Genomic_DNA"/>
</dbReference>
<dbReference type="RefSeq" id="NP_814731.1">
    <property type="nucleotide sequence ID" value="NC_004668.1"/>
</dbReference>
<dbReference type="RefSeq" id="WP_002368241.1">
    <property type="nucleotide sequence ID" value="NZ_KE136527.1"/>
</dbReference>
<dbReference type="STRING" id="226185.EF_0995"/>
<dbReference type="EnsemblBacteria" id="AAO80801">
    <property type="protein sequence ID" value="AAO80801"/>
    <property type="gene ID" value="EF_0995"/>
</dbReference>
<dbReference type="KEGG" id="efa:EF0995"/>
<dbReference type="PATRIC" id="fig|226185.45.peg.3201"/>
<dbReference type="eggNOG" id="COG1589">
    <property type="taxonomic scope" value="Bacteria"/>
</dbReference>
<dbReference type="HOGENOM" id="CLU_046278_0_0_9"/>
<dbReference type="Proteomes" id="UP000001415">
    <property type="component" value="Chromosome"/>
</dbReference>
<dbReference type="GO" id="GO:0032153">
    <property type="term" value="C:cell division site"/>
    <property type="evidence" value="ECO:0007669"/>
    <property type="project" value="UniProtKB-UniRule"/>
</dbReference>
<dbReference type="GO" id="GO:0005886">
    <property type="term" value="C:plasma membrane"/>
    <property type="evidence" value="ECO:0007669"/>
    <property type="project" value="UniProtKB-SubCell"/>
</dbReference>
<dbReference type="GO" id="GO:0043093">
    <property type="term" value="P:FtsZ-dependent cytokinesis"/>
    <property type="evidence" value="ECO:0007669"/>
    <property type="project" value="UniProtKB-UniRule"/>
</dbReference>
<dbReference type="Gene3D" id="3.40.50.10960">
    <property type="match status" value="1"/>
</dbReference>
<dbReference type="HAMAP" id="MF_00912">
    <property type="entry name" value="DivIB"/>
    <property type="match status" value="1"/>
</dbReference>
<dbReference type="InterPro" id="IPR005548">
    <property type="entry name" value="Cell_div_FtsQ/DivIB_C"/>
</dbReference>
<dbReference type="InterPro" id="IPR026580">
    <property type="entry name" value="DivIB"/>
</dbReference>
<dbReference type="InterPro" id="IPR050487">
    <property type="entry name" value="FtsQ_DivIB"/>
</dbReference>
<dbReference type="InterPro" id="IPR034746">
    <property type="entry name" value="POTRA"/>
</dbReference>
<dbReference type="InterPro" id="IPR013685">
    <property type="entry name" value="POTRA_FtsQ_type"/>
</dbReference>
<dbReference type="PANTHER" id="PTHR37820">
    <property type="entry name" value="CELL DIVISION PROTEIN DIVIB"/>
    <property type="match status" value="1"/>
</dbReference>
<dbReference type="PANTHER" id="PTHR37820:SF1">
    <property type="entry name" value="CELL DIVISION PROTEIN FTSQ"/>
    <property type="match status" value="1"/>
</dbReference>
<dbReference type="Pfam" id="PF03799">
    <property type="entry name" value="FtsQ_DivIB_C"/>
    <property type="match status" value="1"/>
</dbReference>
<dbReference type="Pfam" id="PF08478">
    <property type="entry name" value="POTRA_1"/>
    <property type="match status" value="1"/>
</dbReference>
<dbReference type="PROSITE" id="PS51779">
    <property type="entry name" value="POTRA"/>
    <property type="match status" value="1"/>
</dbReference>
<comment type="function">
    <text evidence="1">Cell division protein that may be involved in stabilizing or promoting the assembly of the division complex.</text>
</comment>
<comment type="subcellular location">
    <subcellularLocation>
        <location evidence="1">Cell membrane</location>
        <topology evidence="1">Single-pass type II membrane protein</topology>
    </subcellularLocation>
    <text evidence="1">Localizes to the division septum.</text>
</comment>
<comment type="similarity">
    <text evidence="1">Belongs to the FtsQ/DivIB family. DivIB subfamily.</text>
</comment>
<evidence type="ECO:0000255" key="1">
    <source>
        <dbReference type="HAMAP-Rule" id="MF_00912"/>
    </source>
</evidence>
<evidence type="ECO:0000255" key="2">
    <source>
        <dbReference type="PROSITE-ProRule" id="PRU01115"/>
    </source>
</evidence>
<evidence type="ECO:0000256" key="3">
    <source>
        <dbReference type="SAM" id="MobiDB-lite"/>
    </source>
</evidence>